<keyword id="KW-0997">Cell inner membrane</keyword>
<keyword id="KW-1003">Cell membrane</keyword>
<keyword id="KW-0407">Ion channel</keyword>
<keyword id="KW-0406">Ion transport</keyword>
<keyword id="KW-0472">Membrane</keyword>
<keyword id="KW-0812">Transmembrane</keyword>
<keyword id="KW-1133">Transmembrane helix</keyword>
<keyword id="KW-0813">Transport</keyword>
<name>MSCL_YERPS</name>
<organism>
    <name type="scientific">Yersinia pseudotuberculosis serotype I (strain IP32953)</name>
    <dbReference type="NCBI Taxonomy" id="273123"/>
    <lineage>
        <taxon>Bacteria</taxon>
        <taxon>Pseudomonadati</taxon>
        <taxon>Pseudomonadota</taxon>
        <taxon>Gammaproteobacteria</taxon>
        <taxon>Enterobacterales</taxon>
        <taxon>Yersiniaceae</taxon>
        <taxon>Yersinia</taxon>
    </lineage>
</organism>
<dbReference type="EMBL" id="BX936398">
    <property type="protein sequence ID" value="CAH22907.1"/>
    <property type="molecule type" value="Genomic_DNA"/>
</dbReference>
<dbReference type="RefSeq" id="WP_002209017.1">
    <property type="nucleotide sequence ID" value="NZ_CP009712.1"/>
</dbReference>
<dbReference type="SMR" id="Q664V0"/>
<dbReference type="GeneID" id="57974366"/>
<dbReference type="KEGG" id="yps:YPTB3669"/>
<dbReference type="Proteomes" id="UP000001011">
    <property type="component" value="Chromosome"/>
</dbReference>
<dbReference type="GO" id="GO:0005886">
    <property type="term" value="C:plasma membrane"/>
    <property type="evidence" value="ECO:0007669"/>
    <property type="project" value="UniProtKB-SubCell"/>
</dbReference>
<dbReference type="GO" id="GO:0008381">
    <property type="term" value="F:mechanosensitive monoatomic ion channel activity"/>
    <property type="evidence" value="ECO:0007669"/>
    <property type="project" value="UniProtKB-UniRule"/>
</dbReference>
<dbReference type="FunFam" id="1.10.1200.120:FF:000001">
    <property type="entry name" value="Large-conductance mechanosensitive channel"/>
    <property type="match status" value="1"/>
</dbReference>
<dbReference type="Gene3D" id="1.10.1200.120">
    <property type="entry name" value="Large-conductance mechanosensitive channel, MscL, domain 1"/>
    <property type="match status" value="1"/>
</dbReference>
<dbReference type="HAMAP" id="MF_00115">
    <property type="entry name" value="MscL"/>
    <property type="match status" value="1"/>
</dbReference>
<dbReference type="InterPro" id="IPR019823">
    <property type="entry name" value="Mechanosensitive_channel_CS"/>
</dbReference>
<dbReference type="InterPro" id="IPR001185">
    <property type="entry name" value="MS_channel"/>
</dbReference>
<dbReference type="InterPro" id="IPR037673">
    <property type="entry name" value="MSC/AndL"/>
</dbReference>
<dbReference type="InterPro" id="IPR036019">
    <property type="entry name" value="MscL_channel"/>
</dbReference>
<dbReference type="NCBIfam" id="TIGR00220">
    <property type="entry name" value="mscL"/>
    <property type="match status" value="1"/>
</dbReference>
<dbReference type="NCBIfam" id="NF001841">
    <property type="entry name" value="PRK00567.1-1"/>
    <property type="match status" value="1"/>
</dbReference>
<dbReference type="NCBIfam" id="NF001843">
    <property type="entry name" value="PRK00567.1-4"/>
    <property type="match status" value="1"/>
</dbReference>
<dbReference type="PANTHER" id="PTHR30266:SF2">
    <property type="entry name" value="LARGE-CONDUCTANCE MECHANOSENSITIVE CHANNEL"/>
    <property type="match status" value="1"/>
</dbReference>
<dbReference type="PANTHER" id="PTHR30266">
    <property type="entry name" value="MECHANOSENSITIVE CHANNEL MSCL"/>
    <property type="match status" value="1"/>
</dbReference>
<dbReference type="Pfam" id="PF01741">
    <property type="entry name" value="MscL"/>
    <property type="match status" value="1"/>
</dbReference>
<dbReference type="PRINTS" id="PR01264">
    <property type="entry name" value="MECHCHANNEL"/>
</dbReference>
<dbReference type="SUPFAM" id="SSF81330">
    <property type="entry name" value="Gated mechanosensitive channel"/>
    <property type="match status" value="1"/>
</dbReference>
<dbReference type="PROSITE" id="PS01327">
    <property type="entry name" value="MSCL"/>
    <property type="match status" value="1"/>
</dbReference>
<reference key="1">
    <citation type="journal article" date="2004" name="Proc. Natl. Acad. Sci. U.S.A.">
        <title>Insights into the evolution of Yersinia pestis through whole-genome comparison with Yersinia pseudotuberculosis.</title>
        <authorList>
            <person name="Chain P.S.G."/>
            <person name="Carniel E."/>
            <person name="Larimer F.W."/>
            <person name="Lamerdin J."/>
            <person name="Stoutland P.O."/>
            <person name="Regala W.M."/>
            <person name="Georgescu A.M."/>
            <person name="Vergez L.M."/>
            <person name="Land M.L."/>
            <person name="Motin V.L."/>
            <person name="Brubaker R.R."/>
            <person name="Fowler J."/>
            <person name="Hinnebusch J."/>
            <person name="Marceau M."/>
            <person name="Medigue C."/>
            <person name="Simonet M."/>
            <person name="Chenal-Francisque V."/>
            <person name="Souza B."/>
            <person name="Dacheux D."/>
            <person name="Elliott J.M."/>
            <person name="Derbise A."/>
            <person name="Hauser L.J."/>
            <person name="Garcia E."/>
        </authorList>
    </citation>
    <scope>NUCLEOTIDE SEQUENCE [LARGE SCALE GENOMIC DNA]</scope>
    <source>
        <strain>IP32953</strain>
    </source>
</reference>
<evidence type="ECO:0000255" key="1">
    <source>
        <dbReference type="HAMAP-Rule" id="MF_00115"/>
    </source>
</evidence>
<accession>Q664V0</accession>
<comment type="function">
    <text evidence="1">Channel that opens in response to stretch forces in the membrane lipid bilayer. May participate in the regulation of osmotic pressure changes within the cell.</text>
</comment>
<comment type="subunit">
    <text evidence="1">Homopentamer.</text>
</comment>
<comment type="subcellular location">
    <subcellularLocation>
        <location evidence="1">Cell inner membrane</location>
        <topology evidence="1">Multi-pass membrane protein</topology>
    </subcellularLocation>
</comment>
<comment type="similarity">
    <text evidence="1">Belongs to the MscL family.</text>
</comment>
<gene>
    <name evidence="1" type="primary">mscL</name>
    <name type="ordered locus">YPTB3669</name>
</gene>
<protein>
    <recommendedName>
        <fullName evidence="1">Large-conductance mechanosensitive channel</fullName>
    </recommendedName>
</protein>
<feature type="chain" id="PRO_0000238055" description="Large-conductance mechanosensitive channel">
    <location>
        <begin position="1"/>
        <end position="137"/>
    </location>
</feature>
<feature type="transmembrane region" description="Helical" evidence="1">
    <location>
        <begin position="10"/>
        <end position="30"/>
    </location>
</feature>
<feature type="transmembrane region" description="Helical" evidence="1">
    <location>
        <begin position="76"/>
        <end position="96"/>
    </location>
</feature>
<proteinExistence type="inferred from homology"/>
<sequence length="137" mass="15049">MSFMKEFREFAMRGNVVDLAVGVIIGAAFGRIVSSLVADIIMPPLGLLLGGVDFKQFHFVLRAAEGTIPAVVMNYGTFIQSIFDFVIVALAIFSAVKLMNKLRREKAEEEPATPPAPTTEEILLAEIRDLLKAQHTK</sequence>